<protein>
    <recommendedName>
        <fullName evidence="1">Large ribosomal subunit protein uL29</fullName>
    </recommendedName>
    <alternativeName>
        <fullName evidence="2">50S ribosomal protein L29</fullName>
    </alternativeName>
</protein>
<keyword id="KW-1185">Reference proteome</keyword>
<keyword id="KW-0687">Ribonucleoprotein</keyword>
<keyword id="KW-0689">Ribosomal protein</keyword>
<organism>
    <name type="scientific">Caulobacter vibrioides (strain NA1000 / CB15N)</name>
    <name type="common">Caulobacter crescentus</name>
    <dbReference type="NCBI Taxonomy" id="565050"/>
    <lineage>
        <taxon>Bacteria</taxon>
        <taxon>Pseudomonadati</taxon>
        <taxon>Pseudomonadota</taxon>
        <taxon>Alphaproteobacteria</taxon>
        <taxon>Caulobacterales</taxon>
        <taxon>Caulobacteraceae</taxon>
        <taxon>Caulobacter</taxon>
    </lineage>
</organism>
<name>RL29_CAUVN</name>
<feature type="chain" id="PRO_1000194003" description="Large ribosomal subunit protein uL29">
    <location>
        <begin position="1"/>
        <end position="63"/>
    </location>
</feature>
<accession>B8H4E2</accession>
<proteinExistence type="inferred from homology"/>
<dbReference type="EMBL" id="CP001340">
    <property type="protein sequence ID" value="ACL94779.1"/>
    <property type="molecule type" value="Genomic_DNA"/>
</dbReference>
<dbReference type="RefSeq" id="WP_010919135.1">
    <property type="nucleotide sequence ID" value="NC_011916.1"/>
</dbReference>
<dbReference type="RefSeq" id="YP_002516687.1">
    <property type="nucleotide sequence ID" value="NC_011916.1"/>
</dbReference>
<dbReference type="SMR" id="B8H4E2"/>
<dbReference type="GeneID" id="7333046"/>
<dbReference type="KEGG" id="ccs:CCNA_01314"/>
<dbReference type="PATRIC" id="fig|565050.3.peg.1298"/>
<dbReference type="HOGENOM" id="CLU_158491_1_0_5"/>
<dbReference type="OrthoDB" id="9815192at2"/>
<dbReference type="PhylomeDB" id="B8H4E2"/>
<dbReference type="Proteomes" id="UP000001364">
    <property type="component" value="Chromosome"/>
</dbReference>
<dbReference type="GO" id="GO:0022625">
    <property type="term" value="C:cytosolic large ribosomal subunit"/>
    <property type="evidence" value="ECO:0007669"/>
    <property type="project" value="TreeGrafter"/>
</dbReference>
<dbReference type="GO" id="GO:0003735">
    <property type="term" value="F:structural constituent of ribosome"/>
    <property type="evidence" value="ECO:0007669"/>
    <property type="project" value="InterPro"/>
</dbReference>
<dbReference type="GO" id="GO:0006412">
    <property type="term" value="P:translation"/>
    <property type="evidence" value="ECO:0007669"/>
    <property type="project" value="UniProtKB-UniRule"/>
</dbReference>
<dbReference type="CDD" id="cd00427">
    <property type="entry name" value="Ribosomal_L29_HIP"/>
    <property type="match status" value="1"/>
</dbReference>
<dbReference type="FunFam" id="1.10.287.310:FF:000001">
    <property type="entry name" value="50S ribosomal protein L29"/>
    <property type="match status" value="1"/>
</dbReference>
<dbReference type="Gene3D" id="1.10.287.310">
    <property type="match status" value="1"/>
</dbReference>
<dbReference type="HAMAP" id="MF_00374">
    <property type="entry name" value="Ribosomal_uL29"/>
    <property type="match status" value="1"/>
</dbReference>
<dbReference type="InterPro" id="IPR050063">
    <property type="entry name" value="Ribosomal_protein_uL29"/>
</dbReference>
<dbReference type="InterPro" id="IPR001854">
    <property type="entry name" value="Ribosomal_uL29"/>
</dbReference>
<dbReference type="InterPro" id="IPR018254">
    <property type="entry name" value="Ribosomal_uL29_CS"/>
</dbReference>
<dbReference type="InterPro" id="IPR036049">
    <property type="entry name" value="Ribosomal_uL29_sf"/>
</dbReference>
<dbReference type="NCBIfam" id="TIGR00012">
    <property type="entry name" value="L29"/>
    <property type="match status" value="1"/>
</dbReference>
<dbReference type="PANTHER" id="PTHR10916">
    <property type="entry name" value="60S RIBOSOMAL PROTEIN L35/50S RIBOSOMAL PROTEIN L29"/>
    <property type="match status" value="1"/>
</dbReference>
<dbReference type="PANTHER" id="PTHR10916:SF0">
    <property type="entry name" value="LARGE RIBOSOMAL SUBUNIT PROTEIN UL29C"/>
    <property type="match status" value="1"/>
</dbReference>
<dbReference type="Pfam" id="PF00831">
    <property type="entry name" value="Ribosomal_L29"/>
    <property type="match status" value="1"/>
</dbReference>
<dbReference type="SUPFAM" id="SSF46561">
    <property type="entry name" value="Ribosomal protein L29 (L29p)"/>
    <property type="match status" value="1"/>
</dbReference>
<dbReference type="PROSITE" id="PS00579">
    <property type="entry name" value="RIBOSOMAL_L29"/>
    <property type="match status" value="1"/>
</dbReference>
<evidence type="ECO:0000255" key="1">
    <source>
        <dbReference type="HAMAP-Rule" id="MF_00374"/>
    </source>
</evidence>
<evidence type="ECO:0000305" key="2"/>
<sequence>MKIAEIRGMTPDQLADTLISLKKEQFNLRFQAATGQVEKTHRVNEIRKDIARIKTVLRAKAAA</sequence>
<gene>
    <name evidence="1" type="primary">rpmC</name>
    <name type="ordered locus">CCNA_01314</name>
</gene>
<reference key="1">
    <citation type="journal article" date="2010" name="J. Bacteriol.">
        <title>The genetic basis of laboratory adaptation in Caulobacter crescentus.</title>
        <authorList>
            <person name="Marks M.E."/>
            <person name="Castro-Rojas C.M."/>
            <person name="Teiling C."/>
            <person name="Du L."/>
            <person name="Kapatral V."/>
            <person name="Walunas T.L."/>
            <person name="Crosson S."/>
        </authorList>
    </citation>
    <scope>NUCLEOTIDE SEQUENCE [LARGE SCALE GENOMIC DNA]</scope>
    <source>
        <strain>NA1000 / CB15N</strain>
    </source>
</reference>
<comment type="similarity">
    <text evidence="1">Belongs to the universal ribosomal protein uL29 family.</text>
</comment>